<reference key="1">
    <citation type="journal article" date="2009" name="J. Bacteriol.">
        <title>Complete genome sequence of the extremophilic Bacillus cereus strain Q1 with industrial applications.</title>
        <authorList>
            <person name="Xiong Z."/>
            <person name="Jiang Y."/>
            <person name="Qi D."/>
            <person name="Lu H."/>
            <person name="Yang F."/>
            <person name="Yang J."/>
            <person name="Chen L."/>
            <person name="Sun L."/>
            <person name="Xu X."/>
            <person name="Xue Y."/>
            <person name="Zhu Y."/>
            <person name="Jin Q."/>
        </authorList>
    </citation>
    <scope>NUCLEOTIDE SEQUENCE [LARGE SCALE GENOMIC DNA]</scope>
    <source>
        <strain>Q1</strain>
    </source>
</reference>
<feature type="chain" id="PRO_1000164241" description="Chaperone protein DnaJ">
    <location>
        <begin position="1"/>
        <end position="371"/>
    </location>
</feature>
<feature type="domain" description="J" evidence="1">
    <location>
        <begin position="5"/>
        <end position="69"/>
    </location>
</feature>
<feature type="repeat" description="CXXCXGXG motif">
    <location>
        <begin position="146"/>
        <end position="153"/>
    </location>
</feature>
<feature type="repeat" description="CXXCXGXG motif">
    <location>
        <begin position="163"/>
        <end position="170"/>
    </location>
</feature>
<feature type="repeat" description="CXXCXGXG motif">
    <location>
        <begin position="189"/>
        <end position="196"/>
    </location>
</feature>
<feature type="repeat" description="CXXCXGXG motif">
    <location>
        <begin position="203"/>
        <end position="210"/>
    </location>
</feature>
<feature type="zinc finger region" description="CR-type" evidence="1">
    <location>
        <begin position="133"/>
        <end position="215"/>
    </location>
</feature>
<feature type="binding site" evidence="1">
    <location>
        <position position="146"/>
    </location>
    <ligand>
        <name>Zn(2+)</name>
        <dbReference type="ChEBI" id="CHEBI:29105"/>
        <label>1</label>
    </ligand>
</feature>
<feature type="binding site" evidence="1">
    <location>
        <position position="149"/>
    </location>
    <ligand>
        <name>Zn(2+)</name>
        <dbReference type="ChEBI" id="CHEBI:29105"/>
        <label>1</label>
    </ligand>
</feature>
<feature type="binding site" evidence="1">
    <location>
        <position position="163"/>
    </location>
    <ligand>
        <name>Zn(2+)</name>
        <dbReference type="ChEBI" id="CHEBI:29105"/>
        <label>2</label>
    </ligand>
</feature>
<feature type="binding site" evidence="1">
    <location>
        <position position="166"/>
    </location>
    <ligand>
        <name>Zn(2+)</name>
        <dbReference type="ChEBI" id="CHEBI:29105"/>
        <label>2</label>
    </ligand>
</feature>
<feature type="binding site" evidence="1">
    <location>
        <position position="189"/>
    </location>
    <ligand>
        <name>Zn(2+)</name>
        <dbReference type="ChEBI" id="CHEBI:29105"/>
        <label>2</label>
    </ligand>
</feature>
<feature type="binding site" evidence="1">
    <location>
        <position position="192"/>
    </location>
    <ligand>
        <name>Zn(2+)</name>
        <dbReference type="ChEBI" id="CHEBI:29105"/>
        <label>2</label>
    </ligand>
</feature>
<feature type="binding site" evidence="1">
    <location>
        <position position="203"/>
    </location>
    <ligand>
        <name>Zn(2+)</name>
        <dbReference type="ChEBI" id="CHEBI:29105"/>
        <label>1</label>
    </ligand>
</feature>
<feature type="binding site" evidence="1">
    <location>
        <position position="206"/>
    </location>
    <ligand>
        <name>Zn(2+)</name>
        <dbReference type="ChEBI" id="CHEBI:29105"/>
        <label>1</label>
    </ligand>
</feature>
<proteinExistence type="inferred from homology"/>
<protein>
    <recommendedName>
        <fullName evidence="1">Chaperone protein DnaJ</fullName>
    </recommendedName>
</protein>
<sequence>MSKRDYYEVLGLSKGASKDEIKKAYRRLAKKYHPDVSKEENAIEKFKEVQEAYEVLSDDQKRAQYDQFGHAGANQGFGGFGGGGDFGGGFGFEDIFSSFFGGGGGRRRDPNAPRQGADLQYQVTLDFEEAIFGKELNVEIPVEDPCDTCKGSGAKPGTSKETCKHCSGSGQVSVEQNTPFGRIVNRQACGHCSGTGQIIKEKCTTCHGSGKVRKRKKINVKIPAGIDNGQQIRVSGKGEAGVNGGPAGDLYVVVHVRNHEFFEREGDHIICEMPLTFAQMALGDEVEVPTVHGKVKLKIPAGTQTGTEFRLKGKGAPNVRGYGQGDQYVVVRVVVPTKLTSQQKDLLREFAGQEEQDDSLFGKLKRAFKGE</sequence>
<keyword id="KW-0143">Chaperone</keyword>
<keyword id="KW-0963">Cytoplasm</keyword>
<keyword id="KW-0235">DNA replication</keyword>
<keyword id="KW-0479">Metal-binding</keyword>
<keyword id="KW-0677">Repeat</keyword>
<keyword id="KW-0346">Stress response</keyword>
<keyword id="KW-0862">Zinc</keyword>
<keyword id="KW-0863">Zinc-finger</keyword>
<evidence type="ECO:0000255" key="1">
    <source>
        <dbReference type="HAMAP-Rule" id="MF_01152"/>
    </source>
</evidence>
<gene>
    <name evidence="1" type="primary">dnaJ</name>
    <name type="ordered locus">BCQ_4099</name>
</gene>
<organism>
    <name type="scientific">Bacillus cereus (strain Q1)</name>
    <dbReference type="NCBI Taxonomy" id="361100"/>
    <lineage>
        <taxon>Bacteria</taxon>
        <taxon>Bacillati</taxon>
        <taxon>Bacillota</taxon>
        <taxon>Bacilli</taxon>
        <taxon>Bacillales</taxon>
        <taxon>Bacillaceae</taxon>
        <taxon>Bacillus</taxon>
        <taxon>Bacillus cereus group</taxon>
    </lineage>
</organism>
<dbReference type="EMBL" id="CP000227">
    <property type="protein sequence ID" value="ACM14526.1"/>
    <property type="molecule type" value="Genomic_DNA"/>
</dbReference>
<dbReference type="SMR" id="B9IY80"/>
<dbReference type="KEGG" id="bcq:BCQ_4099"/>
<dbReference type="HOGENOM" id="CLU_017633_0_7_9"/>
<dbReference type="Proteomes" id="UP000000441">
    <property type="component" value="Chromosome"/>
</dbReference>
<dbReference type="GO" id="GO:0005737">
    <property type="term" value="C:cytoplasm"/>
    <property type="evidence" value="ECO:0007669"/>
    <property type="project" value="UniProtKB-SubCell"/>
</dbReference>
<dbReference type="GO" id="GO:0005524">
    <property type="term" value="F:ATP binding"/>
    <property type="evidence" value="ECO:0007669"/>
    <property type="project" value="InterPro"/>
</dbReference>
<dbReference type="GO" id="GO:0031072">
    <property type="term" value="F:heat shock protein binding"/>
    <property type="evidence" value="ECO:0007669"/>
    <property type="project" value="InterPro"/>
</dbReference>
<dbReference type="GO" id="GO:0051082">
    <property type="term" value="F:unfolded protein binding"/>
    <property type="evidence" value="ECO:0007669"/>
    <property type="project" value="UniProtKB-UniRule"/>
</dbReference>
<dbReference type="GO" id="GO:0008270">
    <property type="term" value="F:zinc ion binding"/>
    <property type="evidence" value="ECO:0007669"/>
    <property type="project" value="UniProtKB-UniRule"/>
</dbReference>
<dbReference type="GO" id="GO:0051085">
    <property type="term" value="P:chaperone cofactor-dependent protein refolding"/>
    <property type="evidence" value="ECO:0007669"/>
    <property type="project" value="TreeGrafter"/>
</dbReference>
<dbReference type="GO" id="GO:0006260">
    <property type="term" value="P:DNA replication"/>
    <property type="evidence" value="ECO:0007669"/>
    <property type="project" value="UniProtKB-KW"/>
</dbReference>
<dbReference type="GO" id="GO:0042026">
    <property type="term" value="P:protein refolding"/>
    <property type="evidence" value="ECO:0007669"/>
    <property type="project" value="TreeGrafter"/>
</dbReference>
<dbReference type="GO" id="GO:0009408">
    <property type="term" value="P:response to heat"/>
    <property type="evidence" value="ECO:0007669"/>
    <property type="project" value="InterPro"/>
</dbReference>
<dbReference type="CDD" id="cd06257">
    <property type="entry name" value="DnaJ"/>
    <property type="match status" value="1"/>
</dbReference>
<dbReference type="CDD" id="cd10747">
    <property type="entry name" value="DnaJ_C"/>
    <property type="match status" value="1"/>
</dbReference>
<dbReference type="CDD" id="cd10719">
    <property type="entry name" value="DnaJ_zf"/>
    <property type="match status" value="1"/>
</dbReference>
<dbReference type="FunFam" id="1.10.287.110:FF:000031">
    <property type="entry name" value="Molecular chaperone DnaJ"/>
    <property type="match status" value="1"/>
</dbReference>
<dbReference type="FunFam" id="2.10.230.10:FF:000002">
    <property type="entry name" value="Molecular chaperone DnaJ"/>
    <property type="match status" value="1"/>
</dbReference>
<dbReference type="FunFam" id="2.60.260.20:FF:000004">
    <property type="entry name" value="Molecular chaperone DnaJ"/>
    <property type="match status" value="1"/>
</dbReference>
<dbReference type="FunFam" id="2.60.260.20:FF:000009">
    <property type="entry name" value="Putative Mitochondrial DnaJ chaperone"/>
    <property type="match status" value="1"/>
</dbReference>
<dbReference type="Gene3D" id="6.20.20.10">
    <property type="match status" value="2"/>
</dbReference>
<dbReference type="Gene3D" id="1.10.287.110">
    <property type="entry name" value="DnaJ domain"/>
    <property type="match status" value="1"/>
</dbReference>
<dbReference type="Gene3D" id="2.60.260.20">
    <property type="entry name" value="Urease metallochaperone UreE, N-terminal domain"/>
    <property type="match status" value="2"/>
</dbReference>
<dbReference type="HAMAP" id="MF_01152">
    <property type="entry name" value="DnaJ"/>
    <property type="match status" value="1"/>
</dbReference>
<dbReference type="InterPro" id="IPR012724">
    <property type="entry name" value="DnaJ"/>
</dbReference>
<dbReference type="InterPro" id="IPR002939">
    <property type="entry name" value="DnaJ_C"/>
</dbReference>
<dbReference type="InterPro" id="IPR001623">
    <property type="entry name" value="DnaJ_domain"/>
</dbReference>
<dbReference type="InterPro" id="IPR018253">
    <property type="entry name" value="DnaJ_domain_CS"/>
</dbReference>
<dbReference type="InterPro" id="IPR008971">
    <property type="entry name" value="HSP40/DnaJ_pept-bd"/>
</dbReference>
<dbReference type="InterPro" id="IPR001305">
    <property type="entry name" value="HSP_DnaJ_Cys-rich_dom"/>
</dbReference>
<dbReference type="InterPro" id="IPR036410">
    <property type="entry name" value="HSP_DnaJ_Cys-rich_dom_sf"/>
</dbReference>
<dbReference type="InterPro" id="IPR036869">
    <property type="entry name" value="J_dom_sf"/>
</dbReference>
<dbReference type="NCBIfam" id="TIGR02349">
    <property type="entry name" value="DnaJ_bact"/>
    <property type="match status" value="1"/>
</dbReference>
<dbReference type="NCBIfam" id="NF008035">
    <property type="entry name" value="PRK10767.1"/>
    <property type="match status" value="1"/>
</dbReference>
<dbReference type="NCBIfam" id="NF010873">
    <property type="entry name" value="PRK14280.1"/>
    <property type="match status" value="1"/>
</dbReference>
<dbReference type="PANTHER" id="PTHR43096:SF48">
    <property type="entry name" value="CHAPERONE PROTEIN DNAJ"/>
    <property type="match status" value="1"/>
</dbReference>
<dbReference type="PANTHER" id="PTHR43096">
    <property type="entry name" value="DNAJ HOMOLOG 1, MITOCHONDRIAL-RELATED"/>
    <property type="match status" value="1"/>
</dbReference>
<dbReference type="Pfam" id="PF00226">
    <property type="entry name" value="DnaJ"/>
    <property type="match status" value="1"/>
</dbReference>
<dbReference type="Pfam" id="PF01556">
    <property type="entry name" value="DnaJ_C"/>
    <property type="match status" value="1"/>
</dbReference>
<dbReference type="Pfam" id="PF00684">
    <property type="entry name" value="DnaJ_CXXCXGXG"/>
    <property type="match status" value="1"/>
</dbReference>
<dbReference type="PRINTS" id="PR00625">
    <property type="entry name" value="JDOMAIN"/>
</dbReference>
<dbReference type="SMART" id="SM00271">
    <property type="entry name" value="DnaJ"/>
    <property type="match status" value="1"/>
</dbReference>
<dbReference type="SUPFAM" id="SSF46565">
    <property type="entry name" value="Chaperone J-domain"/>
    <property type="match status" value="1"/>
</dbReference>
<dbReference type="SUPFAM" id="SSF57938">
    <property type="entry name" value="DnaJ/Hsp40 cysteine-rich domain"/>
    <property type="match status" value="1"/>
</dbReference>
<dbReference type="SUPFAM" id="SSF49493">
    <property type="entry name" value="HSP40/DnaJ peptide-binding domain"/>
    <property type="match status" value="2"/>
</dbReference>
<dbReference type="PROSITE" id="PS00636">
    <property type="entry name" value="DNAJ_1"/>
    <property type="match status" value="1"/>
</dbReference>
<dbReference type="PROSITE" id="PS50076">
    <property type="entry name" value="DNAJ_2"/>
    <property type="match status" value="1"/>
</dbReference>
<dbReference type="PROSITE" id="PS51188">
    <property type="entry name" value="ZF_CR"/>
    <property type="match status" value="1"/>
</dbReference>
<name>DNAJ_BACCQ</name>
<comment type="function">
    <text evidence="1">Participates actively in the response to hyperosmotic and heat shock by preventing the aggregation of stress-denatured proteins and by disaggregating proteins, also in an autonomous, DnaK-independent fashion. Unfolded proteins bind initially to DnaJ; upon interaction with the DnaJ-bound protein, DnaK hydrolyzes its bound ATP, resulting in the formation of a stable complex. GrpE releases ADP from DnaK; ATP binding to DnaK triggers the release of the substrate protein, thus completing the reaction cycle. Several rounds of ATP-dependent interactions between DnaJ, DnaK and GrpE are required for fully efficient folding. Also involved, together with DnaK and GrpE, in the DNA replication of plasmids through activation of initiation proteins.</text>
</comment>
<comment type="cofactor">
    <cofactor evidence="1">
        <name>Zn(2+)</name>
        <dbReference type="ChEBI" id="CHEBI:29105"/>
    </cofactor>
    <text evidence="1">Binds 2 Zn(2+) ions per monomer.</text>
</comment>
<comment type="subunit">
    <text evidence="1">Homodimer.</text>
</comment>
<comment type="subcellular location">
    <subcellularLocation>
        <location evidence="1">Cytoplasm</location>
    </subcellularLocation>
</comment>
<comment type="domain">
    <text evidence="1">The J domain is necessary and sufficient to stimulate DnaK ATPase activity. Zinc center 1 plays an important role in the autonomous, DnaK-independent chaperone activity of DnaJ. Zinc center 2 is essential for interaction with DnaK and for DnaJ activity.</text>
</comment>
<comment type="similarity">
    <text evidence="1">Belongs to the DnaJ family.</text>
</comment>
<accession>B9IY80</accession>